<protein>
    <recommendedName>
        <fullName evidence="1">ATP synthase subunit delta</fullName>
    </recommendedName>
    <alternativeName>
        <fullName evidence="1">ATP synthase F(1) sector subunit delta</fullName>
    </alternativeName>
    <alternativeName>
        <fullName evidence="1">F-type ATPase subunit delta</fullName>
        <shortName evidence="1">F-ATPase subunit delta</shortName>
    </alternativeName>
</protein>
<gene>
    <name evidence="1" type="primary">atpH</name>
    <name type="ordered locus">Achl_2341</name>
</gene>
<evidence type="ECO:0000255" key="1">
    <source>
        <dbReference type="HAMAP-Rule" id="MF_01416"/>
    </source>
</evidence>
<name>ATPD_PSECP</name>
<sequence>MAGVSSESLATALAALEAKLPTASLQLAKELFGILGMVDSSAGLRRALTDPSRNGDEKSALVRQLVGGKVSADAAEVAGGLAGSRWASARDIGDALETLAATVVISVAENKSAVSASGITGLEELENDLFSFNQAVASSHEVQRALSEPQASGAAKAALAEKLVPGVSEEAKVLITQAVTQPRGIKATRLVERFAELAAKRQQRWIATVSVTRPLTSTQLSRLQAGLNALYGRELKVNINVDPALIGGIRVQVGDEVLDASVISRLGELQRQLAG</sequence>
<reference key="1">
    <citation type="submission" date="2009-01" db="EMBL/GenBank/DDBJ databases">
        <title>Complete sequence of chromosome of Arthrobacter chlorophenolicus A6.</title>
        <authorList>
            <consortium name="US DOE Joint Genome Institute"/>
            <person name="Lucas S."/>
            <person name="Copeland A."/>
            <person name="Lapidus A."/>
            <person name="Glavina del Rio T."/>
            <person name="Tice H."/>
            <person name="Bruce D."/>
            <person name="Goodwin L."/>
            <person name="Pitluck S."/>
            <person name="Goltsman E."/>
            <person name="Clum A."/>
            <person name="Larimer F."/>
            <person name="Land M."/>
            <person name="Hauser L."/>
            <person name="Kyrpides N."/>
            <person name="Mikhailova N."/>
            <person name="Jansson J."/>
            <person name="Richardson P."/>
        </authorList>
    </citation>
    <scope>NUCLEOTIDE SEQUENCE [LARGE SCALE GENOMIC DNA]</scope>
    <source>
        <strain>ATCC 700700 / DSM 12829 / CIP 107037 / JCM 12360 / KCTC 9906 / NCIMB 13794 / A6</strain>
    </source>
</reference>
<comment type="function">
    <text evidence="1">F(1)F(0) ATP synthase produces ATP from ADP in the presence of a proton or sodium gradient. F-type ATPases consist of two structural domains, F(1) containing the extramembraneous catalytic core and F(0) containing the membrane proton channel, linked together by a central stalk and a peripheral stalk. During catalysis, ATP synthesis in the catalytic domain of F(1) is coupled via a rotary mechanism of the central stalk subunits to proton translocation.</text>
</comment>
<comment type="function">
    <text evidence="1">This protein is part of the stalk that links CF(0) to CF(1). It either transmits conformational changes from CF(0) to CF(1) or is implicated in proton conduction.</text>
</comment>
<comment type="subunit">
    <text evidence="1">F-type ATPases have 2 components, F(1) - the catalytic core - and F(0) - the membrane proton channel. F(1) has five subunits: alpha(3), beta(3), gamma(1), delta(1), epsilon(1). F(0) has three main subunits: a(1), b(2) and c(10-14). The alpha and beta chains form an alternating ring which encloses part of the gamma chain. F(1) is attached to F(0) by a central stalk formed by the gamma and epsilon chains, while a peripheral stalk is formed by the delta and b chains.</text>
</comment>
<comment type="subcellular location">
    <subcellularLocation>
        <location evidence="1">Cell membrane</location>
        <topology evidence="1">Peripheral membrane protein</topology>
    </subcellularLocation>
</comment>
<comment type="similarity">
    <text evidence="1">Belongs to the ATPase delta chain family.</text>
</comment>
<accession>B8HAZ2</accession>
<feature type="chain" id="PRO_0000382057" description="ATP synthase subunit delta">
    <location>
        <begin position="1"/>
        <end position="275"/>
    </location>
</feature>
<dbReference type="EMBL" id="CP001341">
    <property type="protein sequence ID" value="ACL40306.1"/>
    <property type="molecule type" value="Genomic_DNA"/>
</dbReference>
<dbReference type="RefSeq" id="WP_015937519.1">
    <property type="nucleotide sequence ID" value="NC_011886.1"/>
</dbReference>
<dbReference type="SMR" id="B8HAZ2"/>
<dbReference type="STRING" id="452863.Achl_2341"/>
<dbReference type="KEGG" id="ach:Achl_2341"/>
<dbReference type="eggNOG" id="COG0712">
    <property type="taxonomic scope" value="Bacteria"/>
</dbReference>
<dbReference type="HOGENOM" id="CLU_088880_0_0_11"/>
<dbReference type="OrthoDB" id="5242917at2"/>
<dbReference type="Proteomes" id="UP000002505">
    <property type="component" value="Chromosome"/>
</dbReference>
<dbReference type="GO" id="GO:0005886">
    <property type="term" value="C:plasma membrane"/>
    <property type="evidence" value="ECO:0007669"/>
    <property type="project" value="UniProtKB-SubCell"/>
</dbReference>
<dbReference type="GO" id="GO:0045259">
    <property type="term" value="C:proton-transporting ATP synthase complex"/>
    <property type="evidence" value="ECO:0007669"/>
    <property type="project" value="UniProtKB-KW"/>
</dbReference>
<dbReference type="GO" id="GO:0046933">
    <property type="term" value="F:proton-transporting ATP synthase activity, rotational mechanism"/>
    <property type="evidence" value="ECO:0007669"/>
    <property type="project" value="UniProtKB-UniRule"/>
</dbReference>
<dbReference type="HAMAP" id="MF_01416">
    <property type="entry name" value="ATP_synth_delta_bact"/>
    <property type="match status" value="1"/>
</dbReference>
<dbReference type="InterPro" id="IPR020781">
    <property type="entry name" value="ATPase_OSCP/d_CS"/>
</dbReference>
<dbReference type="InterPro" id="IPR000711">
    <property type="entry name" value="ATPase_OSCP/dsu"/>
</dbReference>
<dbReference type="NCBIfam" id="TIGR01145">
    <property type="entry name" value="ATP_synt_delta"/>
    <property type="match status" value="1"/>
</dbReference>
<dbReference type="NCBIfam" id="NF009967">
    <property type="entry name" value="PRK13430.1"/>
    <property type="match status" value="1"/>
</dbReference>
<dbReference type="PANTHER" id="PTHR11910">
    <property type="entry name" value="ATP SYNTHASE DELTA CHAIN"/>
    <property type="match status" value="1"/>
</dbReference>
<dbReference type="Pfam" id="PF00213">
    <property type="entry name" value="OSCP"/>
    <property type="match status" value="1"/>
</dbReference>
<dbReference type="PRINTS" id="PR00125">
    <property type="entry name" value="ATPASEDELTA"/>
</dbReference>
<dbReference type="PROSITE" id="PS00389">
    <property type="entry name" value="ATPASE_DELTA"/>
    <property type="match status" value="1"/>
</dbReference>
<proteinExistence type="inferred from homology"/>
<organism>
    <name type="scientific">Pseudarthrobacter chlorophenolicus (strain ATCC 700700 / DSM 12829 / CIP 107037 / JCM 12360 / KCTC 9906 / NCIMB 13794 / A6)</name>
    <name type="common">Arthrobacter chlorophenolicus</name>
    <dbReference type="NCBI Taxonomy" id="452863"/>
    <lineage>
        <taxon>Bacteria</taxon>
        <taxon>Bacillati</taxon>
        <taxon>Actinomycetota</taxon>
        <taxon>Actinomycetes</taxon>
        <taxon>Micrococcales</taxon>
        <taxon>Micrococcaceae</taxon>
        <taxon>Pseudarthrobacter</taxon>
    </lineage>
</organism>
<keyword id="KW-0066">ATP synthesis</keyword>
<keyword id="KW-1003">Cell membrane</keyword>
<keyword id="KW-0139">CF(1)</keyword>
<keyword id="KW-0375">Hydrogen ion transport</keyword>
<keyword id="KW-0406">Ion transport</keyword>
<keyword id="KW-0472">Membrane</keyword>
<keyword id="KW-0813">Transport</keyword>